<organism>
    <name type="scientific">Mus musculus</name>
    <name type="common">Mouse</name>
    <dbReference type="NCBI Taxonomy" id="10090"/>
    <lineage>
        <taxon>Eukaryota</taxon>
        <taxon>Metazoa</taxon>
        <taxon>Chordata</taxon>
        <taxon>Craniata</taxon>
        <taxon>Vertebrata</taxon>
        <taxon>Euteleostomi</taxon>
        <taxon>Mammalia</taxon>
        <taxon>Eutheria</taxon>
        <taxon>Euarchontoglires</taxon>
        <taxon>Glires</taxon>
        <taxon>Rodentia</taxon>
        <taxon>Myomorpha</taxon>
        <taxon>Muroidea</taxon>
        <taxon>Muridae</taxon>
        <taxon>Murinae</taxon>
        <taxon>Mus</taxon>
        <taxon>Mus</taxon>
    </lineage>
</organism>
<gene>
    <name type="primary">Polr2k</name>
    <name type="synonym">Mt1a</name>
</gene>
<name>RPAB4_MOUSE</name>
<keyword id="KW-0240">DNA-directed RNA polymerase</keyword>
<keyword id="KW-0479">Metal-binding</keyword>
<keyword id="KW-0539">Nucleus</keyword>
<keyword id="KW-1185">Reference proteome</keyword>
<keyword id="KW-0804">Transcription</keyword>
<keyword id="KW-0862">Zinc</keyword>
<keyword id="KW-0863">Zinc-finger</keyword>
<dbReference type="EMBL" id="S63758">
    <property type="protein sequence ID" value="AAB27565.2"/>
    <property type="status" value="ALT_INIT"/>
    <property type="molecule type" value="mRNA"/>
</dbReference>
<dbReference type="EMBL" id="BC028543">
    <property type="protein sequence ID" value="AAH28543.1"/>
    <property type="molecule type" value="mRNA"/>
</dbReference>
<dbReference type="CCDS" id="CCDS56980.1"/>
<dbReference type="RefSeq" id="NP_075616.2">
    <property type="nucleotide sequence ID" value="NM_023127.3"/>
</dbReference>
<dbReference type="SMR" id="Q63871"/>
<dbReference type="FunCoup" id="Q63871">
    <property type="interactions" value="1974"/>
</dbReference>
<dbReference type="STRING" id="10090.ENSMUSP00000051968"/>
<dbReference type="PhosphoSitePlus" id="Q63871"/>
<dbReference type="PaxDb" id="10090-ENSMUSP00000051968"/>
<dbReference type="ProteomicsDB" id="262700"/>
<dbReference type="Pumba" id="Q63871"/>
<dbReference type="DNASU" id="17749"/>
<dbReference type="Ensembl" id="ENSMUST00000180159.8">
    <property type="protein sequence ID" value="ENSMUSP00000136975.2"/>
    <property type="gene ID" value="ENSMUSG00000045996.13"/>
</dbReference>
<dbReference type="GeneID" id="17749"/>
<dbReference type="KEGG" id="mmu:17749"/>
<dbReference type="UCSC" id="uc007vml.2">
    <property type="organism name" value="mouse"/>
</dbReference>
<dbReference type="AGR" id="MGI:102725"/>
<dbReference type="CTD" id="5440"/>
<dbReference type="MGI" id="MGI:102725">
    <property type="gene designation" value="Polr2k"/>
</dbReference>
<dbReference type="VEuPathDB" id="HostDB:ENSMUSG00000045996"/>
<dbReference type="eggNOG" id="KOG3507">
    <property type="taxonomic scope" value="Eukaryota"/>
</dbReference>
<dbReference type="GeneTree" id="ENSGT00390000008918"/>
<dbReference type="HOGENOM" id="CLU_179456_1_0_1"/>
<dbReference type="InParanoid" id="Q63871"/>
<dbReference type="OrthoDB" id="5585087at2759"/>
<dbReference type="PhylomeDB" id="Q63871"/>
<dbReference type="Reactome" id="R-MMU-112382">
    <property type="pathway name" value="Formation of RNA Pol II elongation complex"/>
</dbReference>
<dbReference type="Reactome" id="R-MMU-113418">
    <property type="pathway name" value="Formation of the Early Elongation Complex"/>
</dbReference>
<dbReference type="Reactome" id="R-MMU-5250924">
    <property type="pathway name" value="B-WICH complex positively regulates rRNA expression"/>
</dbReference>
<dbReference type="Reactome" id="R-MMU-674695">
    <property type="pathway name" value="RNA Polymerase II Pre-transcription Events"/>
</dbReference>
<dbReference type="Reactome" id="R-MMU-6781823">
    <property type="pathway name" value="Formation of TC-NER Pre-Incision Complex"/>
</dbReference>
<dbReference type="Reactome" id="R-MMU-6782135">
    <property type="pathway name" value="Dual incision in TC-NER"/>
</dbReference>
<dbReference type="Reactome" id="R-MMU-6782210">
    <property type="pathway name" value="Gap-filling DNA repair synthesis and ligation in TC-NER"/>
</dbReference>
<dbReference type="Reactome" id="R-MMU-6796648">
    <property type="pathway name" value="TP53 Regulates Transcription of DNA Repair Genes"/>
</dbReference>
<dbReference type="Reactome" id="R-MMU-6803529">
    <property type="pathway name" value="FGFR2 alternative splicing"/>
</dbReference>
<dbReference type="Reactome" id="R-MMU-6807505">
    <property type="pathway name" value="RNA polymerase II transcribes snRNA genes"/>
</dbReference>
<dbReference type="Reactome" id="R-MMU-72086">
    <property type="pathway name" value="mRNA Capping"/>
</dbReference>
<dbReference type="Reactome" id="R-MMU-72163">
    <property type="pathway name" value="mRNA Splicing - Major Pathway"/>
</dbReference>
<dbReference type="Reactome" id="R-MMU-72165">
    <property type="pathway name" value="mRNA Splicing - Minor Pathway"/>
</dbReference>
<dbReference type="Reactome" id="R-MMU-72203">
    <property type="pathway name" value="Processing of Capped Intron-Containing Pre-mRNA"/>
</dbReference>
<dbReference type="Reactome" id="R-MMU-73762">
    <property type="pathway name" value="RNA Polymerase I Transcription Initiation"/>
</dbReference>
<dbReference type="Reactome" id="R-MMU-73772">
    <property type="pathway name" value="RNA Polymerase I Promoter Escape"/>
</dbReference>
<dbReference type="Reactome" id="R-MMU-73776">
    <property type="pathway name" value="RNA Polymerase II Promoter Escape"/>
</dbReference>
<dbReference type="Reactome" id="R-MMU-73779">
    <property type="pathway name" value="RNA Polymerase II Transcription Pre-Initiation And Promoter Opening"/>
</dbReference>
<dbReference type="Reactome" id="R-MMU-73863">
    <property type="pathway name" value="RNA Polymerase I Transcription Termination"/>
</dbReference>
<dbReference type="Reactome" id="R-MMU-75953">
    <property type="pathway name" value="RNA Polymerase II Transcription Initiation"/>
</dbReference>
<dbReference type="Reactome" id="R-MMU-75955">
    <property type="pathway name" value="RNA Polymerase II Transcription Elongation"/>
</dbReference>
<dbReference type="Reactome" id="R-MMU-76042">
    <property type="pathway name" value="RNA Polymerase II Transcription Initiation And Promoter Clearance"/>
</dbReference>
<dbReference type="Reactome" id="R-MMU-76061">
    <property type="pathway name" value="RNA Polymerase III Transcription Initiation From Type 1 Promoter"/>
</dbReference>
<dbReference type="Reactome" id="R-MMU-76066">
    <property type="pathway name" value="RNA Polymerase III Transcription Initiation From Type 2 Promoter"/>
</dbReference>
<dbReference type="Reactome" id="R-MMU-76071">
    <property type="pathway name" value="RNA Polymerase III Transcription Initiation From Type 3 Promoter"/>
</dbReference>
<dbReference type="Reactome" id="R-MMU-77075">
    <property type="pathway name" value="RNA Pol II CTD phosphorylation and interaction with CE"/>
</dbReference>
<dbReference type="Reactome" id="R-MMU-9018519">
    <property type="pathway name" value="Estrogen-dependent gene expression"/>
</dbReference>
<dbReference type="BioGRID-ORCS" id="17749">
    <property type="hits" value="7 hits in 41 CRISPR screens"/>
</dbReference>
<dbReference type="ChiTaRS" id="Polr2k">
    <property type="organism name" value="mouse"/>
</dbReference>
<dbReference type="PRO" id="PR:Q63871"/>
<dbReference type="Proteomes" id="UP000000589">
    <property type="component" value="Chromosome 15"/>
</dbReference>
<dbReference type="RNAct" id="Q63871">
    <property type="molecule type" value="protein"/>
</dbReference>
<dbReference type="Bgee" id="ENSMUSG00000045996">
    <property type="expression patterns" value="Expressed in embryonic facial prominence and 82 other cell types or tissues"/>
</dbReference>
<dbReference type="ExpressionAtlas" id="Q63871">
    <property type="expression patterns" value="baseline and differential"/>
</dbReference>
<dbReference type="GO" id="GO:0005730">
    <property type="term" value="C:nucleolus"/>
    <property type="evidence" value="ECO:0007669"/>
    <property type="project" value="UniProtKB-SubCell"/>
</dbReference>
<dbReference type="GO" id="GO:0005654">
    <property type="term" value="C:nucleoplasm"/>
    <property type="evidence" value="ECO:0000304"/>
    <property type="project" value="Reactome"/>
</dbReference>
<dbReference type="GO" id="GO:0005634">
    <property type="term" value="C:nucleus"/>
    <property type="evidence" value="ECO:0000250"/>
    <property type="project" value="UniProtKB"/>
</dbReference>
<dbReference type="GO" id="GO:0005665">
    <property type="term" value="C:RNA polymerase II, core complex"/>
    <property type="evidence" value="ECO:0000250"/>
    <property type="project" value="UniProtKB"/>
</dbReference>
<dbReference type="GO" id="GO:0003677">
    <property type="term" value="F:DNA binding"/>
    <property type="evidence" value="ECO:0007669"/>
    <property type="project" value="InterPro"/>
</dbReference>
<dbReference type="GO" id="GO:0003899">
    <property type="term" value="F:DNA-directed RNA polymerase activity"/>
    <property type="evidence" value="ECO:0007669"/>
    <property type="project" value="InterPro"/>
</dbReference>
<dbReference type="GO" id="GO:0008270">
    <property type="term" value="F:zinc ion binding"/>
    <property type="evidence" value="ECO:0007669"/>
    <property type="project" value="UniProtKB-KW"/>
</dbReference>
<dbReference type="GO" id="GO:0006366">
    <property type="term" value="P:transcription by RNA polymerase II"/>
    <property type="evidence" value="ECO:0000314"/>
    <property type="project" value="MGI"/>
</dbReference>
<dbReference type="FunFam" id="2.20.28.30:FF:000001">
    <property type="entry name" value="DNA-directed RNA polymerases I, II, and III subunit RPABC4"/>
    <property type="match status" value="1"/>
</dbReference>
<dbReference type="Gene3D" id="2.20.28.30">
    <property type="entry name" value="RNA polymerase ii, chain L"/>
    <property type="match status" value="1"/>
</dbReference>
<dbReference type="InterPro" id="IPR006591">
    <property type="entry name" value="RNAP_P/RPABC4"/>
</dbReference>
<dbReference type="InterPro" id="IPR039747">
    <property type="entry name" value="RPABC4"/>
</dbReference>
<dbReference type="InterPro" id="IPR029040">
    <property type="entry name" value="RPABC4/Spt4"/>
</dbReference>
<dbReference type="PANTHER" id="PTHR12056">
    <property type="entry name" value="DNA-DIRECTED RNA POLYMERASES I, II, AND III"/>
    <property type="match status" value="1"/>
</dbReference>
<dbReference type="PANTHER" id="PTHR12056:SF4">
    <property type="entry name" value="DNA-DIRECTED RNA POLYMERASES I, II, AND III SUBUNIT RPABC4"/>
    <property type="match status" value="1"/>
</dbReference>
<dbReference type="Pfam" id="PF03604">
    <property type="entry name" value="Zn_ribbon_RPAB4"/>
    <property type="match status" value="1"/>
</dbReference>
<dbReference type="SMART" id="SM00659">
    <property type="entry name" value="RPOLCX"/>
    <property type="match status" value="1"/>
</dbReference>
<dbReference type="SUPFAM" id="SSF63393">
    <property type="entry name" value="RNA polymerase subunits"/>
    <property type="match status" value="1"/>
</dbReference>
<proteinExistence type="inferred from homology"/>
<evidence type="ECO:0000250" key="1">
    <source>
        <dbReference type="UniProtKB" id="P40422"/>
    </source>
</evidence>
<evidence type="ECO:0000250" key="2">
    <source>
        <dbReference type="UniProtKB" id="P53803"/>
    </source>
</evidence>
<evidence type="ECO:0000255" key="3"/>
<evidence type="ECO:0000305" key="4"/>
<comment type="function">
    <text evidence="1 2">DNA-dependent RNA polymerase catalyzes the transcription of DNA into RNA using the four ribonucleoside triphosphates as substrates. Common component of RNA polymerases I, II and III which synthesize ribosomal RNA precursors, mRNA precursors and many functional non-coding RNAs, and a small RNAs, such as 5S rRNA and tRNAs, respectively.</text>
</comment>
<comment type="subunit">
    <text evidence="1 2">Component of the RNA polymerase I (Pol I), RNA polymerase II (Pol II) and RNA polymerase III (Pol III) complexes consisting of at least 13, 12 and 17 subunits, respectively (By similarity). Pol I complex consists of a ten-subunit catalytic core composed of POLR1A/RPA1, POLR1B/RPA2, POLR1C/RPAC1, POLR1D/RPAC2, POLR1H/RPA12, POLR2E/RPABC1, POLR2F/RPABC2, POLR2H/RPABC3, POLR2K/RPABC4 and POLR2L/RPABC5; a mobile stalk subunit POLR1F/RPA43 protruding from the core and additional subunits homologous to general transcription factors POLR1E/RPA49 and POLR1G/RPA34. Part of Pol I pre-initiation complex (PIC), in which Pol I core assembles with RRN3 and promoter-bound UTBF and SL1/TIF-IB complex (By similarity). Pol II complex contains a ten-subunit catalytic core composed of POLR2A/RPB1, POLR2B/RPB2, POLR2C/RPB3, POLR2I/RPB9, POLR2J/RPB11, POLR2E/RPABC1, POLR2F/RPABC2, POLR2H/RPABC3, POLR2K/RPABC4 and POLR2L/RPABC5 and a mobile stalk composed of two subunits POLR2D/RPB4 and POLR2G/RPB7. Part of Pol II(G) complex, in which Pol II core associates with an additional subunit POLR2M; unlike conventional Pol II, Pol II(G) functions as a transcriptional repressor. Part of TBP-based Pol II pre-initiation complex (PIC), in which Pol II core assembles with general transcription factors and other specific initiation factors including GTF2E1, GTF2E2, GTF2F1, GTF2F2, TCEA1, ERCC2, ERCC3, GTF2H2, GTF2H3, GTF2H4, GTF2H5, GTF2A1, GTF2A2, GTF2B and TBP; this large multi-subunit PIC complex mediates DNA unwinding and targets Pol II core to the transcription start site where the first phosphodiester bond forms (By similarity). Pol III complex consists of a ten-subunit catalytic core composed of POLR3A/RPC1, POLR3B/RPC2, POLR1C/RPAC1, POLR1D/RPAC2, POLR3K/RPC10, POLR2E/RPABC1, POLR2F/RPABC2, POLR2H/RPABC3, POLR2K/RPABC4 and POLR2L/RPABC5; a mobile stalk composed of two subunits POLR3H/RPC8 and CRCP/RPC9, protruding from the core and functioning primarily in transcription initiation; and additional subunits homologous to general transcription factors of the RNA polymerase II machinery, POLR3C/RPC3-POLR3F/RPC6-POLR3G/RPC7 heterotrimer required for transcription initiation and POLR3D/RPC4-POLR3E/RPC5 heterodimer involved in both transcription initiation and termination (By similarity).</text>
</comment>
<comment type="subcellular location">
    <subcellularLocation>
        <location evidence="2">Nucleus</location>
    </subcellularLocation>
    <subcellularLocation>
        <location evidence="2">Nucleus</location>
        <location evidence="2">Nucleolus</location>
    </subcellularLocation>
</comment>
<comment type="similarity">
    <text evidence="4">Belongs to the archaeal Rpo12/eukaryotic RPC10 RNA polymerase subunit family.</text>
</comment>
<comment type="sequence caution" evidence="4">
    <conflict type="erroneous initiation">
        <sequence resource="EMBL-CDS" id="AAB27565"/>
    </conflict>
</comment>
<protein>
    <recommendedName>
        <fullName>DNA-directed RNA polymerases I, II, and III subunit RPABC4</fullName>
        <shortName>RNA polymerases I, II, and III subunit ABC4</shortName>
    </recommendedName>
    <alternativeName>
        <fullName>DNA-directed RNA polymerase II subunit K</fullName>
    </alternativeName>
    <alternativeName>
        <fullName>Metallothionein-I gene transcription activator</fullName>
    </alternativeName>
    <alternativeName>
        <fullName>RPB10alpha</fullName>
    </alternativeName>
</protein>
<accession>Q63871</accession>
<reference key="1">
    <citation type="journal article" date="1993" name="DNA Cell Biol.">
        <title>cDNA cloning of a mouse factor that activates transcription from a metal response element of the mouse metallothionein-I gene in yeast.</title>
        <authorList>
            <person name="Xu C."/>
        </authorList>
    </citation>
    <scope>NUCLEOTIDE SEQUENCE [MRNA]</scope>
</reference>
<reference key="2">
    <citation type="journal article" date="2004" name="Genome Res.">
        <title>The status, quality, and expansion of the NIH full-length cDNA project: the Mammalian Gene Collection (MGC).</title>
        <authorList>
            <consortium name="The MGC Project Team"/>
        </authorList>
    </citation>
    <scope>NUCLEOTIDE SEQUENCE [LARGE SCALE MRNA]</scope>
    <source>
        <tissue>Mammary gland</tissue>
    </source>
</reference>
<sequence>MDAQKDVQPPKQQPMIYICGECHTENEIKSRDPIRCRECGYRIMYKKRTKRLVVFDAR</sequence>
<feature type="chain" id="PRO_0000159751" description="DNA-directed RNA polymerases I, II, and III subunit RPABC4">
    <location>
        <begin position="1"/>
        <end position="58"/>
    </location>
</feature>
<feature type="zinc finger region" description="C4-type" evidence="3">
    <location>
        <begin position="19"/>
        <end position="39"/>
    </location>
</feature>
<feature type="binding site" evidence="2">
    <location>
        <position position="19"/>
    </location>
    <ligand>
        <name>Zn(2+)</name>
        <dbReference type="ChEBI" id="CHEBI:29105"/>
    </ligand>
</feature>
<feature type="binding site" evidence="2">
    <location>
        <position position="22"/>
    </location>
    <ligand>
        <name>Zn(2+)</name>
        <dbReference type="ChEBI" id="CHEBI:29105"/>
    </ligand>
</feature>
<feature type="binding site" evidence="2">
    <location>
        <position position="36"/>
    </location>
    <ligand>
        <name>Zn(2+)</name>
        <dbReference type="ChEBI" id="CHEBI:29105"/>
    </ligand>
</feature>
<feature type="binding site" evidence="2">
    <location>
        <position position="39"/>
    </location>
    <ligand>
        <name>Zn(2+)</name>
        <dbReference type="ChEBI" id="CHEBI:29105"/>
    </ligand>
</feature>